<comment type="function">
    <text evidence="2">One of the essential components for the initiation of protein synthesis. Protects formylmethionyl-tRNA from spontaneous hydrolysis and promotes its binding to the 30S ribosomal subunits. Also involved in the hydrolysis of GTP during the formation of the 70S ribosomal complex.</text>
</comment>
<comment type="subcellular location">
    <subcellularLocation>
        <location evidence="2">Cytoplasm</location>
    </subcellularLocation>
</comment>
<comment type="similarity">
    <text evidence="2">Belongs to the TRAFAC class translation factor GTPase superfamily. Classic translation factor GTPase family. IF-2 subfamily.</text>
</comment>
<protein>
    <recommendedName>
        <fullName evidence="2">Translation initiation factor IF-2</fullName>
    </recommendedName>
</protein>
<reference key="1">
    <citation type="journal article" date="2008" name="J. Bacteriol.">
        <title>Genome sequence of the fish pathogen Renibacterium salmoninarum suggests reductive evolution away from an environmental Arthrobacter ancestor.</title>
        <authorList>
            <person name="Wiens G.D."/>
            <person name="Rockey D.D."/>
            <person name="Wu Z."/>
            <person name="Chang J."/>
            <person name="Levy R."/>
            <person name="Crane S."/>
            <person name="Chen D.S."/>
            <person name="Capri G.R."/>
            <person name="Burnett J.R."/>
            <person name="Sudheesh P.S."/>
            <person name="Schipma M.J."/>
            <person name="Burd H."/>
            <person name="Bhattacharyya A."/>
            <person name="Rhodes L.D."/>
            <person name="Kaul R."/>
            <person name="Strom M.S."/>
        </authorList>
    </citation>
    <scope>NUCLEOTIDE SEQUENCE [LARGE SCALE GENOMIC DNA]</scope>
    <source>
        <strain>ATCC 33209 / DSM 20767 / JCM 11484 / NBRC 15589 / NCIMB 2235</strain>
    </source>
</reference>
<evidence type="ECO:0000250" key="1"/>
<evidence type="ECO:0000255" key="2">
    <source>
        <dbReference type="HAMAP-Rule" id="MF_00100"/>
    </source>
</evidence>
<evidence type="ECO:0000256" key="3">
    <source>
        <dbReference type="SAM" id="MobiDB-lite"/>
    </source>
</evidence>
<organism>
    <name type="scientific">Renibacterium salmoninarum (strain ATCC 33209 / DSM 20767 / JCM 11484 / NBRC 15589 / NCIMB 2235)</name>
    <dbReference type="NCBI Taxonomy" id="288705"/>
    <lineage>
        <taxon>Bacteria</taxon>
        <taxon>Bacillati</taxon>
        <taxon>Actinomycetota</taxon>
        <taxon>Actinomycetes</taxon>
        <taxon>Micrococcales</taxon>
        <taxon>Micrococcaceae</taxon>
        <taxon>Renibacterium</taxon>
    </lineage>
</organism>
<accession>A9WPV8</accession>
<name>IF2_RENSM</name>
<dbReference type="EMBL" id="CP000910">
    <property type="protein sequence ID" value="ABY22403.1"/>
    <property type="molecule type" value="Genomic_DNA"/>
</dbReference>
<dbReference type="SMR" id="A9WPV8"/>
<dbReference type="STRING" id="288705.RSal33209_0656"/>
<dbReference type="KEGG" id="rsa:RSal33209_0656"/>
<dbReference type="eggNOG" id="COG0532">
    <property type="taxonomic scope" value="Bacteria"/>
</dbReference>
<dbReference type="HOGENOM" id="CLU_006301_9_1_11"/>
<dbReference type="Proteomes" id="UP000002007">
    <property type="component" value="Chromosome"/>
</dbReference>
<dbReference type="GO" id="GO:0005829">
    <property type="term" value="C:cytosol"/>
    <property type="evidence" value="ECO:0007669"/>
    <property type="project" value="TreeGrafter"/>
</dbReference>
<dbReference type="GO" id="GO:0005525">
    <property type="term" value="F:GTP binding"/>
    <property type="evidence" value="ECO:0007669"/>
    <property type="project" value="UniProtKB-KW"/>
</dbReference>
<dbReference type="GO" id="GO:0003924">
    <property type="term" value="F:GTPase activity"/>
    <property type="evidence" value="ECO:0007669"/>
    <property type="project" value="UniProtKB-UniRule"/>
</dbReference>
<dbReference type="GO" id="GO:0003743">
    <property type="term" value="F:translation initiation factor activity"/>
    <property type="evidence" value="ECO:0007669"/>
    <property type="project" value="UniProtKB-UniRule"/>
</dbReference>
<dbReference type="CDD" id="cd01887">
    <property type="entry name" value="IF2_eIF5B"/>
    <property type="match status" value="1"/>
</dbReference>
<dbReference type="CDD" id="cd03702">
    <property type="entry name" value="IF2_mtIF2_II"/>
    <property type="match status" value="1"/>
</dbReference>
<dbReference type="CDD" id="cd03692">
    <property type="entry name" value="mtIF2_IVc"/>
    <property type="match status" value="1"/>
</dbReference>
<dbReference type="FunFam" id="2.40.30.10:FF:000007">
    <property type="entry name" value="Translation initiation factor IF-2"/>
    <property type="match status" value="1"/>
</dbReference>
<dbReference type="FunFam" id="2.40.30.10:FF:000008">
    <property type="entry name" value="Translation initiation factor IF-2"/>
    <property type="match status" value="1"/>
</dbReference>
<dbReference type="FunFam" id="3.40.50.10050:FF:000001">
    <property type="entry name" value="Translation initiation factor IF-2"/>
    <property type="match status" value="1"/>
</dbReference>
<dbReference type="FunFam" id="3.40.50.300:FF:000019">
    <property type="entry name" value="Translation initiation factor IF-2"/>
    <property type="match status" value="1"/>
</dbReference>
<dbReference type="Gene3D" id="1.10.10.2480">
    <property type="match status" value="1"/>
</dbReference>
<dbReference type="Gene3D" id="3.40.50.300">
    <property type="entry name" value="P-loop containing nucleotide triphosphate hydrolases"/>
    <property type="match status" value="1"/>
</dbReference>
<dbReference type="Gene3D" id="2.40.30.10">
    <property type="entry name" value="Translation factors"/>
    <property type="match status" value="2"/>
</dbReference>
<dbReference type="Gene3D" id="3.40.50.10050">
    <property type="entry name" value="Translation initiation factor IF- 2, domain 3"/>
    <property type="match status" value="1"/>
</dbReference>
<dbReference type="HAMAP" id="MF_00100_B">
    <property type="entry name" value="IF_2_B"/>
    <property type="match status" value="1"/>
</dbReference>
<dbReference type="InterPro" id="IPR053905">
    <property type="entry name" value="EF-G-like_DII"/>
</dbReference>
<dbReference type="InterPro" id="IPR044145">
    <property type="entry name" value="IF2_II"/>
</dbReference>
<dbReference type="InterPro" id="IPR006847">
    <property type="entry name" value="IF2_N"/>
</dbReference>
<dbReference type="InterPro" id="IPR027417">
    <property type="entry name" value="P-loop_NTPase"/>
</dbReference>
<dbReference type="InterPro" id="IPR005225">
    <property type="entry name" value="Small_GTP-bd"/>
</dbReference>
<dbReference type="InterPro" id="IPR000795">
    <property type="entry name" value="T_Tr_GTP-bd_dom"/>
</dbReference>
<dbReference type="InterPro" id="IPR000178">
    <property type="entry name" value="TF_IF2_bacterial-like"/>
</dbReference>
<dbReference type="InterPro" id="IPR015760">
    <property type="entry name" value="TIF_IF2"/>
</dbReference>
<dbReference type="InterPro" id="IPR023115">
    <property type="entry name" value="TIF_IF2_dom3"/>
</dbReference>
<dbReference type="InterPro" id="IPR036925">
    <property type="entry name" value="TIF_IF2_dom3_sf"/>
</dbReference>
<dbReference type="InterPro" id="IPR009000">
    <property type="entry name" value="Transl_B-barrel_sf"/>
</dbReference>
<dbReference type="NCBIfam" id="TIGR00487">
    <property type="entry name" value="IF-2"/>
    <property type="match status" value="1"/>
</dbReference>
<dbReference type="NCBIfam" id="TIGR00231">
    <property type="entry name" value="small_GTP"/>
    <property type="match status" value="1"/>
</dbReference>
<dbReference type="PANTHER" id="PTHR43381:SF5">
    <property type="entry name" value="TR-TYPE G DOMAIN-CONTAINING PROTEIN"/>
    <property type="match status" value="1"/>
</dbReference>
<dbReference type="PANTHER" id="PTHR43381">
    <property type="entry name" value="TRANSLATION INITIATION FACTOR IF-2-RELATED"/>
    <property type="match status" value="1"/>
</dbReference>
<dbReference type="Pfam" id="PF22042">
    <property type="entry name" value="EF-G_D2"/>
    <property type="match status" value="1"/>
</dbReference>
<dbReference type="Pfam" id="PF00009">
    <property type="entry name" value="GTP_EFTU"/>
    <property type="match status" value="1"/>
</dbReference>
<dbReference type="Pfam" id="PF11987">
    <property type="entry name" value="IF-2"/>
    <property type="match status" value="1"/>
</dbReference>
<dbReference type="Pfam" id="PF04760">
    <property type="entry name" value="IF2_N"/>
    <property type="match status" value="2"/>
</dbReference>
<dbReference type="PRINTS" id="PR00315">
    <property type="entry name" value="ELONGATNFCT"/>
</dbReference>
<dbReference type="SUPFAM" id="SSF52156">
    <property type="entry name" value="Initiation factor IF2/eIF5b, domain 3"/>
    <property type="match status" value="1"/>
</dbReference>
<dbReference type="SUPFAM" id="SSF52540">
    <property type="entry name" value="P-loop containing nucleoside triphosphate hydrolases"/>
    <property type="match status" value="1"/>
</dbReference>
<dbReference type="SUPFAM" id="SSF50447">
    <property type="entry name" value="Translation proteins"/>
    <property type="match status" value="2"/>
</dbReference>
<dbReference type="PROSITE" id="PS51722">
    <property type="entry name" value="G_TR_2"/>
    <property type="match status" value="1"/>
</dbReference>
<dbReference type="PROSITE" id="PS01176">
    <property type="entry name" value="IF2"/>
    <property type="match status" value="1"/>
</dbReference>
<keyword id="KW-0963">Cytoplasm</keyword>
<keyword id="KW-0342">GTP-binding</keyword>
<keyword id="KW-0396">Initiation factor</keyword>
<keyword id="KW-0547">Nucleotide-binding</keyword>
<keyword id="KW-0648">Protein biosynthesis</keyword>
<keyword id="KW-1185">Reference proteome</keyword>
<proteinExistence type="inferred from homology"/>
<sequence length="956" mass="98746">MPDSVRAETGESVAKARVHELAKELGITSKDAVAKLQELGEFVRSASSTIEAPVVKKLRDAFPDAVAAPEAAAPKAPARPAPKAPAKPAEAQASVKPVETQAPATPAAAKAAATPVAPAAPAVKEQKEGSAARPGAGGPRPGNNPFATSQGMPRAGARAEGERPAAAPASGAGRPRPGGPRPGAPRPGNNPFASSQGMPRSGGRGDGERSGGPRPAAGSGGPRPAAGSGGPRPAAGSGGPRPGAGSGASRPGGGGGNRPTPGMMPNRTERPAPAGRGAGGGAGGPGRGGGARPGGGAPAGGGFGKGGRGRGGTQGAFGKGGAGRGKQRKSKRAKRQELEQMSAPSLGGVSVPRGDGNTVVRLRRGSSITDFADKIEANPAALVTVLFHLGEMATATQSLDEETFALLGEELGYKLQVVSPEDEERELLSTFDIDFDAELEAEGDEDLQARPPVVTVMGHVDHGKTRLLDAIRNSDVVAGEHGGITQHIGAYQVNHVHEGEVRKITFIDTPGHEAFTAMRARGAKVTDIAILVVAADDGVMPQTVEALNHAQAAGVPIVVAVNKIDKEGANPEKIRGQLTEYGLVPEEYGGETMFVDVSARQNQNIDALLEAVMLTADAALDLRANPNKDARGIAIEANLDKGRGSVATVLVQSGTLAVGDTIVAGTAHGRVRAMFDDDGTAVTEAGPSRPVQVLGLSSVPRAGDTFFVTGDERTARQIAEKREAADRNAALAKRRKRISLEDFDQAVADGKVDTLNLILKGDVSGAVEALEDSLLKIDVGEGVQLRVIHRGVGAITQNDVNLATVDSAIIIGFNVKPAERVAELADREGVDMRFYSVIYAAIDDIELALKGMLKPEYEEVQLGTAEIREIFRSSKFGNIAGSIVRSGLIRRNAKARVLRAGVLIGDNLTVDSLKRVKDDATEVREGFECGIGLGSFNDLQLEDIIETFEMREKPRV</sequence>
<gene>
    <name evidence="2" type="primary">infB</name>
    <name type="ordered locus">RSal33209_0656</name>
</gene>
<feature type="chain" id="PRO_0000335502" description="Translation initiation factor IF-2">
    <location>
        <begin position="1"/>
        <end position="956"/>
    </location>
</feature>
<feature type="domain" description="tr-type G">
    <location>
        <begin position="449"/>
        <end position="620"/>
    </location>
</feature>
<feature type="region of interest" description="Disordered" evidence="3">
    <location>
        <begin position="68"/>
        <end position="357"/>
    </location>
</feature>
<feature type="region of interest" description="G1" evidence="1">
    <location>
        <begin position="458"/>
        <end position="465"/>
    </location>
</feature>
<feature type="region of interest" description="G2" evidence="1">
    <location>
        <begin position="483"/>
        <end position="487"/>
    </location>
</feature>
<feature type="region of interest" description="G3" evidence="1">
    <location>
        <begin position="508"/>
        <end position="511"/>
    </location>
</feature>
<feature type="region of interest" description="G4" evidence="1">
    <location>
        <begin position="562"/>
        <end position="565"/>
    </location>
</feature>
<feature type="region of interest" description="G5" evidence="1">
    <location>
        <begin position="598"/>
        <end position="600"/>
    </location>
</feature>
<feature type="compositionally biased region" description="Low complexity" evidence="3">
    <location>
        <begin position="86"/>
        <end position="123"/>
    </location>
</feature>
<feature type="compositionally biased region" description="Low complexity" evidence="3">
    <location>
        <begin position="141"/>
        <end position="156"/>
    </location>
</feature>
<feature type="compositionally biased region" description="Low complexity" evidence="3">
    <location>
        <begin position="164"/>
        <end position="175"/>
    </location>
</feature>
<feature type="compositionally biased region" description="Low complexity" evidence="3">
    <location>
        <begin position="212"/>
        <end position="235"/>
    </location>
</feature>
<feature type="compositionally biased region" description="Gly residues" evidence="3">
    <location>
        <begin position="236"/>
        <end position="257"/>
    </location>
</feature>
<feature type="compositionally biased region" description="Gly residues" evidence="3">
    <location>
        <begin position="276"/>
        <end position="324"/>
    </location>
</feature>
<feature type="compositionally biased region" description="Basic residues" evidence="3">
    <location>
        <begin position="325"/>
        <end position="334"/>
    </location>
</feature>
<feature type="binding site" evidence="2">
    <location>
        <begin position="458"/>
        <end position="465"/>
    </location>
    <ligand>
        <name>GTP</name>
        <dbReference type="ChEBI" id="CHEBI:37565"/>
    </ligand>
</feature>
<feature type="binding site" evidence="2">
    <location>
        <begin position="508"/>
        <end position="512"/>
    </location>
    <ligand>
        <name>GTP</name>
        <dbReference type="ChEBI" id="CHEBI:37565"/>
    </ligand>
</feature>
<feature type="binding site" evidence="2">
    <location>
        <begin position="562"/>
        <end position="565"/>
    </location>
    <ligand>
        <name>GTP</name>
        <dbReference type="ChEBI" id="CHEBI:37565"/>
    </ligand>
</feature>